<sequence>MKVMASVKRICRNCKIIKRKGVVRVICSSDPRHKQRQG</sequence>
<dbReference type="EMBL" id="CP000614">
    <property type="protein sequence ID" value="ABO53365.1"/>
    <property type="molecule type" value="Genomic_DNA"/>
</dbReference>
<dbReference type="SMR" id="A4JAR2"/>
<dbReference type="KEGG" id="bvi:Bcep1808_0352"/>
<dbReference type="eggNOG" id="COG0257">
    <property type="taxonomic scope" value="Bacteria"/>
</dbReference>
<dbReference type="HOGENOM" id="CLU_135723_6_2_4"/>
<dbReference type="Proteomes" id="UP000002287">
    <property type="component" value="Chromosome 1"/>
</dbReference>
<dbReference type="GO" id="GO:0005737">
    <property type="term" value="C:cytoplasm"/>
    <property type="evidence" value="ECO:0007669"/>
    <property type="project" value="UniProtKB-ARBA"/>
</dbReference>
<dbReference type="GO" id="GO:1990904">
    <property type="term" value="C:ribonucleoprotein complex"/>
    <property type="evidence" value="ECO:0007669"/>
    <property type="project" value="UniProtKB-KW"/>
</dbReference>
<dbReference type="GO" id="GO:0005840">
    <property type="term" value="C:ribosome"/>
    <property type="evidence" value="ECO:0007669"/>
    <property type="project" value="UniProtKB-KW"/>
</dbReference>
<dbReference type="GO" id="GO:0003735">
    <property type="term" value="F:structural constituent of ribosome"/>
    <property type="evidence" value="ECO:0007669"/>
    <property type="project" value="InterPro"/>
</dbReference>
<dbReference type="GO" id="GO:0006412">
    <property type="term" value="P:translation"/>
    <property type="evidence" value="ECO:0007669"/>
    <property type="project" value="UniProtKB-UniRule"/>
</dbReference>
<dbReference type="HAMAP" id="MF_00251">
    <property type="entry name" value="Ribosomal_bL36"/>
    <property type="match status" value="1"/>
</dbReference>
<dbReference type="InterPro" id="IPR000473">
    <property type="entry name" value="Ribosomal_bL36"/>
</dbReference>
<dbReference type="InterPro" id="IPR035977">
    <property type="entry name" value="Ribosomal_bL36_sp"/>
</dbReference>
<dbReference type="NCBIfam" id="TIGR01022">
    <property type="entry name" value="rpmJ_bact"/>
    <property type="match status" value="1"/>
</dbReference>
<dbReference type="PANTHER" id="PTHR42888">
    <property type="entry name" value="50S RIBOSOMAL PROTEIN L36, CHLOROPLASTIC"/>
    <property type="match status" value="1"/>
</dbReference>
<dbReference type="PANTHER" id="PTHR42888:SF1">
    <property type="entry name" value="LARGE RIBOSOMAL SUBUNIT PROTEIN BL36C"/>
    <property type="match status" value="1"/>
</dbReference>
<dbReference type="Pfam" id="PF00444">
    <property type="entry name" value="Ribosomal_L36"/>
    <property type="match status" value="1"/>
</dbReference>
<dbReference type="SUPFAM" id="SSF57840">
    <property type="entry name" value="Ribosomal protein L36"/>
    <property type="match status" value="1"/>
</dbReference>
<dbReference type="PROSITE" id="PS00828">
    <property type="entry name" value="RIBOSOMAL_L36"/>
    <property type="match status" value="1"/>
</dbReference>
<evidence type="ECO:0000255" key="1">
    <source>
        <dbReference type="HAMAP-Rule" id="MF_00251"/>
    </source>
</evidence>
<evidence type="ECO:0000305" key="2"/>
<reference key="1">
    <citation type="submission" date="2007-03" db="EMBL/GenBank/DDBJ databases">
        <title>Complete sequence of chromosome 1 of Burkholderia vietnamiensis G4.</title>
        <authorList>
            <consortium name="US DOE Joint Genome Institute"/>
            <person name="Copeland A."/>
            <person name="Lucas S."/>
            <person name="Lapidus A."/>
            <person name="Barry K."/>
            <person name="Detter J.C."/>
            <person name="Glavina del Rio T."/>
            <person name="Hammon N."/>
            <person name="Israni S."/>
            <person name="Dalin E."/>
            <person name="Tice H."/>
            <person name="Pitluck S."/>
            <person name="Chain P."/>
            <person name="Malfatti S."/>
            <person name="Shin M."/>
            <person name="Vergez L."/>
            <person name="Schmutz J."/>
            <person name="Larimer F."/>
            <person name="Land M."/>
            <person name="Hauser L."/>
            <person name="Kyrpides N."/>
            <person name="Tiedje J."/>
            <person name="Richardson P."/>
        </authorList>
    </citation>
    <scope>NUCLEOTIDE SEQUENCE [LARGE SCALE GENOMIC DNA]</scope>
    <source>
        <strain>G4 / LMG 22486</strain>
    </source>
</reference>
<accession>A4JAR2</accession>
<gene>
    <name evidence="1" type="primary">rpmJ</name>
    <name type="ordered locus">Bcep1808_0352</name>
</gene>
<protein>
    <recommendedName>
        <fullName evidence="1">Large ribosomal subunit protein bL36</fullName>
    </recommendedName>
    <alternativeName>
        <fullName evidence="2">50S ribosomal protein L36</fullName>
    </alternativeName>
</protein>
<organism>
    <name type="scientific">Burkholderia vietnamiensis (strain G4 / LMG 22486)</name>
    <name type="common">Burkholderia cepacia (strain R1808)</name>
    <dbReference type="NCBI Taxonomy" id="269482"/>
    <lineage>
        <taxon>Bacteria</taxon>
        <taxon>Pseudomonadati</taxon>
        <taxon>Pseudomonadota</taxon>
        <taxon>Betaproteobacteria</taxon>
        <taxon>Burkholderiales</taxon>
        <taxon>Burkholderiaceae</taxon>
        <taxon>Burkholderia</taxon>
        <taxon>Burkholderia cepacia complex</taxon>
    </lineage>
</organism>
<feature type="chain" id="PRO_1000003399" description="Large ribosomal subunit protein bL36">
    <location>
        <begin position="1"/>
        <end position="38"/>
    </location>
</feature>
<name>RL36_BURVG</name>
<keyword id="KW-0687">Ribonucleoprotein</keyword>
<keyword id="KW-0689">Ribosomal protein</keyword>
<comment type="similarity">
    <text evidence="1">Belongs to the bacterial ribosomal protein bL36 family.</text>
</comment>
<proteinExistence type="inferred from homology"/>